<proteinExistence type="predicted"/>
<sequence length="258" mass="28643">MSETKNELEDLLEKAATEPAHRPAFFRTLLESTVWVPGTAAQGEAVVEDSALDLQHWEKEDGTSVIPFFTSLEALQQAVEDEQAFVVMPVRTLFEMTLGETLFLNAKLPTGKEFMPREISLLIGEEGNPLSSQEILEGGESLILSEVAEPPAQMIDSLTTLFKTIKPVKRAFICSIKENEEAQPNLLIGIEADGDIEEIIQATGSVATDTLPGDEPIDICQVKKGEKGISHFITEHIAPFYERRWGGFLRDFKQNRII</sequence>
<accession>P0AFZ1</accession>
<accession>P31143</accession>
<accession>P76579</accession>
<feature type="chain" id="PRO_0000072209" description="Protein SseB">
    <location>
        <begin position="1"/>
        <end position="258"/>
    </location>
</feature>
<keyword id="KW-1185">Reference proteome</keyword>
<evidence type="ECO:0000305" key="1"/>
<organism>
    <name type="scientific">Escherichia coli (strain K12)</name>
    <dbReference type="NCBI Taxonomy" id="83333"/>
    <lineage>
        <taxon>Bacteria</taxon>
        <taxon>Pseudomonadati</taxon>
        <taxon>Pseudomonadota</taxon>
        <taxon>Gammaproteobacteria</taxon>
        <taxon>Enterobacterales</taxon>
        <taxon>Enterobacteriaceae</taxon>
        <taxon>Escherichia</taxon>
    </lineage>
</organism>
<protein>
    <recommendedName>
        <fullName>Protein SseB</fullName>
    </recommendedName>
</protein>
<reference key="1">
    <citation type="journal article" date="1994" name="J. Biochem.">
        <title>Enhancement of serine-sensitivity by a gene encoding rhodanese-like protein in Escherichia coli.</title>
        <authorList>
            <person name="Hama H."/>
            <person name="Kayahara T."/>
            <person name="Ogawa W."/>
            <person name="Tsuda M."/>
            <person name="Tsuchiya T."/>
        </authorList>
    </citation>
    <scope>NUCLEOTIDE SEQUENCE [GENOMIC DNA]</scope>
    <source>
        <strain>K12 / W3133-2</strain>
    </source>
</reference>
<reference key="2">
    <citation type="journal article" date="1997" name="DNA Res.">
        <title>Construction of a contiguous 874-kb sequence of the Escherichia coli-K12 genome corresponding to 50.0-68.8 min on the linkage map and analysis of its sequence features.</title>
        <authorList>
            <person name="Yamamoto Y."/>
            <person name="Aiba H."/>
            <person name="Baba T."/>
            <person name="Hayashi K."/>
            <person name="Inada T."/>
            <person name="Isono K."/>
            <person name="Itoh T."/>
            <person name="Kimura S."/>
            <person name="Kitagawa M."/>
            <person name="Makino K."/>
            <person name="Miki T."/>
            <person name="Mitsuhashi N."/>
            <person name="Mizobuchi K."/>
            <person name="Mori H."/>
            <person name="Nakade S."/>
            <person name="Nakamura Y."/>
            <person name="Nashimoto H."/>
            <person name="Oshima T."/>
            <person name="Oyama S."/>
            <person name="Saito N."/>
            <person name="Sampei G."/>
            <person name="Satoh Y."/>
            <person name="Sivasundaram S."/>
            <person name="Tagami H."/>
            <person name="Takahashi H."/>
            <person name="Takeda J."/>
            <person name="Takemoto K."/>
            <person name="Uehara K."/>
            <person name="Wada C."/>
            <person name="Yamagata S."/>
            <person name="Horiuchi T."/>
        </authorList>
    </citation>
    <scope>NUCLEOTIDE SEQUENCE [LARGE SCALE GENOMIC DNA]</scope>
    <source>
        <strain>K12 / W3110 / ATCC 27325 / DSM 5911</strain>
    </source>
</reference>
<reference key="3">
    <citation type="journal article" date="1997" name="Science">
        <title>The complete genome sequence of Escherichia coli K-12.</title>
        <authorList>
            <person name="Blattner F.R."/>
            <person name="Plunkett G. III"/>
            <person name="Bloch C.A."/>
            <person name="Perna N.T."/>
            <person name="Burland V."/>
            <person name="Riley M."/>
            <person name="Collado-Vides J."/>
            <person name="Glasner J.D."/>
            <person name="Rode C.K."/>
            <person name="Mayhew G.F."/>
            <person name="Gregor J."/>
            <person name="Davis N.W."/>
            <person name="Kirkpatrick H.A."/>
            <person name="Goeden M.A."/>
            <person name="Rose D.J."/>
            <person name="Mau B."/>
            <person name="Shao Y."/>
        </authorList>
    </citation>
    <scope>NUCLEOTIDE SEQUENCE [LARGE SCALE GENOMIC DNA]</scope>
    <source>
        <strain>K12 / MG1655 / ATCC 47076</strain>
    </source>
</reference>
<reference key="4">
    <citation type="journal article" date="2006" name="Mol. Syst. Biol.">
        <title>Highly accurate genome sequences of Escherichia coli K-12 strains MG1655 and W3110.</title>
        <authorList>
            <person name="Hayashi K."/>
            <person name="Morooka N."/>
            <person name="Yamamoto Y."/>
            <person name="Fujita K."/>
            <person name="Isono K."/>
            <person name="Choi S."/>
            <person name="Ohtsubo E."/>
            <person name="Baba T."/>
            <person name="Wanner B.L."/>
            <person name="Mori H."/>
            <person name="Horiuchi T."/>
        </authorList>
    </citation>
    <scope>NUCLEOTIDE SEQUENCE [LARGE SCALE GENOMIC DNA]</scope>
    <source>
        <strain>K12 / W3110 / ATCC 27325 / DSM 5911</strain>
    </source>
</reference>
<gene>
    <name type="primary">sseB</name>
    <name type="ordered locus">b2522</name>
    <name type="ordered locus">JW5404</name>
</gene>
<dbReference type="EMBL" id="D10496">
    <property type="protein sequence ID" value="BAA01383.1"/>
    <property type="status" value="ALT_FRAME"/>
    <property type="molecule type" value="Genomic_DNA"/>
</dbReference>
<dbReference type="EMBL" id="U00096">
    <property type="protein sequence ID" value="AAC75575.2"/>
    <property type="molecule type" value="Genomic_DNA"/>
</dbReference>
<dbReference type="EMBL" id="AP009048">
    <property type="protein sequence ID" value="BAA16412.2"/>
    <property type="molecule type" value="Genomic_DNA"/>
</dbReference>
<dbReference type="RefSeq" id="NP_417017.4">
    <property type="nucleotide sequence ID" value="NC_000913.3"/>
</dbReference>
<dbReference type="RefSeq" id="WP_001295479.1">
    <property type="nucleotide sequence ID" value="NZ_LN832404.1"/>
</dbReference>
<dbReference type="BioGRID" id="4261365">
    <property type="interactions" value="9"/>
</dbReference>
<dbReference type="BioGRID" id="851333">
    <property type="interactions" value="2"/>
</dbReference>
<dbReference type="FunCoup" id="P0AFZ1">
    <property type="interactions" value="52"/>
</dbReference>
<dbReference type="IntAct" id="P0AFZ1">
    <property type="interactions" value="2"/>
</dbReference>
<dbReference type="STRING" id="511145.b2522"/>
<dbReference type="jPOST" id="P0AFZ1"/>
<dbReference type="PaxDb" id="511145-b2522"/>
<dbReference type="EnsemblBacteria" id="AAC75575">
    <property type="protein sequence ID" value="AAC75575"/>
    <property type="gene ID" value="b2522"/>
</dbReference>
<dbReference type="GeneID" id="946994"/>
<dbReference type="KEGG" id="ecj:JW5404"/>
<dbReference type="KEGG" id="eco:b2522"/>
<dbReference type="KEGG" id="ecoc:C3026_13980"/>
<dbReference type="PATRIC" id="fig|1411691.4.peg.4212"/>
<dbReference type="EchoBASE" id="EB1558"/>
<dbReference type="eggNOG" id="ENOG502Z89T">
    <property type="taxonomic scope" value="Bacteria"/>
</dbReference>
<dbReference type="HOGENOM" id="CLU_093817_1_0_6"/>
<dbReference type="InParanoid" id="P0AFZ1"/>
<dbReference type="OMA" id="WEKDDGT"/>
<dbReference type="OrthoDB" id="5622177at2"/>
<dbReference type="PhylomeDB" id="P0AFZ1"/>
<dbReference type="BioCyc" id="EcoCyc:EG11601-MONOMER"/>
<dbReference type="PRO" id="PR:P0AFZ1"/>
<dbReference type="Proteomes" id="UP000000625">
    <property type="component" value="Chromosome"/>
</dbReference>
<dbReference type="InterPro" id="IPR027945">
    <property type="entry name" value="SseB_C"/>
</dbReference>
<dbReference type="InterPro" id="IPR009839">
    <property type="entry name" value="SseB_N"/>
</dbReference>
<dbReference type="NCBIfam" id="NF008624">
    <property type="entry name" value="PRK11611.1"/>
    <property type="match status" value="1"/>
</dbReference>
<dbReference type="Pfam" id="PF07179">
    <property type="entry name" value="SseB"/>
    <property type="match status" value="1"/>
</dbReference>
<dbReference type="Pfam" id="PF14581">
    <property type="entry name" value="SseB_C"/>
    <property type="match status" value="1"/>
</dbReference>
<comment type="function">
    <text>May be involved in the enhancement of serine-sensitivity.</text>
</comment>
<comment type="sequence caution" evidence="1">
    <conflict type="frameshift">
        <sequence resource="EMBL-CDS" id="BAA01383"/>
    </conflict>
</comment>
<name>SSEB_ECOLI</name>